<gene>
    <name type="primary">Aldh1b1</name>
    <name type="synonym">Aldhx</name>
</gene>
<evidence type="ECO:0000250" key="1"/>
<evidence type="ECO:0000255" key="2"/>
<evidence type="ECO:0000255" key="3">
    <source>
        <dbReference type="PROSITE-ProRule" id="PRU10007"/>
    </source>
</evidence>
<evidence type="ECO:0000255" key="4">
    <source>
        <dbReference type="PROSITE-ProRule" id="PRU10008"/>
    </source>
</evidence>
<evidence type="ECO:0000305" key="5"/>
<evidence type="ECO:0007744" key="6">
    <source>
    </source>
</evidence>
<evidence type="ECO:0007744" key="7">
    <source>
    </source>
</evidence>
<proteinExistence type="evidence at protein level"/>
<dbReference type="EC" id="1.2.1.3"/>
<dbReference type="EMBL" id="AK012213">
    <property type="protein sequence ID" value="BAB28101.1"/>
    <property type="molecule type" value="mRNA"/>
</dbReference>
<dbReference type="EMBL" id="AK088396">
    <property type="protein sequence ID" value="BAC40326.1"/>
    <property type="molecule type" value="mRNA"/>
</dbReference>
<dbReference type="EMBL" id="AK150992">
    <property type="protein sequence ID" value="BAE30016.1"/>
    <property type="molecule type" value="mRNA"/>
</dbReference>
<dbReference type="EMBL" id="AK151349">
    <property type="protein sequence ID" value="BAE30325.1"/>
    <property type="molecule type" value="mRNA"/>
</dbReference>
<dbReference type="EMBL" id="AK151364">
    <property type="protein sequence ID" value="BAE30339.1"/>
    <property type="molecule type" value="mRNA"/>
</dbReference>
<dbReference type="EMBL" id="AK153416">
    <property type="protein sequence ID" value="BAE31976.1"/>
    <property type="molecule type" value="mRNA"/>
</dbReference>
<dbReference type="EMBL" id="BC020001">
    <property type="protein sequence ID" value="AAH20001.1"/>
    <property type="molecule type" value="mRNA"/>
</dbReference>
<dbReference type="EMBL" id="BC086768">
    <property type="protein sequence ID" value="AAH86768.1"/>
    <property type="molecule type" value="mRNA"/>
</dbReference>
<dbReference type="CCDS" id="CCDS18139.1"/>
<dbReference type="RefSeq" id="NP_082546.1">
    <property type="nucleotide sequence ID" value="NM_028270.4"/>
</dbReference>
<dbReference type="SMR" id="Q9CZS1"/>
<dbReference type="BioGRID" id="215422">
    <property type="interactions" value="15"/>
</dbReference>
<dbReference type="FunCoup" id="Q9CZS1">
    <property type="interactions" value="2115"/>
</dbReference>
<dbReference type="IntAct" id="Q9CZS1">
    <property type="interactions" value="2"/>
</dbReference>
<dbReference type="STRING" id="10090.ENSMUSP00000041260"/>
<dbReference type="GlyGen" id="Q9CZS1">
    <property type="glycosylation" value="2 sites, 1 O-linked glycan (1 site)"/>
</dbReference>
<dbReference type="iPTMnet" id="Q9CZS1"/>
<dbReference type="PhosphoSitePlus" id="Q9CZS1"/>
<dbReference type="SwissPalm" id="Q9CZS1"/>
<dbReference type="jPOST" id="Q9CZS1"/>
<dbReference type="PaxDb" id="10090-ENSMUSP00000041260"/>
<dbReference type="PeptideAtlas" id="Q9CZS1"/>
<dbReference type="ProteomicsDB" id="296090"/>
<dbReference type="Antibodypedia" id="12074">
    <property type="antibodies" value="283 antibodies from 34 providers"/>
</dbReference>
<dbReference type="DNASU" id="72535"/>
<dbReference type="Ensembl" id="ENSMUST00000044384.5">
    <property type="protein sequence ID" value="ENSMUSP00000041260.5"/>
    <property type="gene ID" value="ENSMUSG00000035561.6"/>
</dbReference>
<dbReference type="GeneID" id="72535"/>
<dbReference type="KEGG" id="mmu:72535"/>
<dbReference type="UCSC" id="uc008ssx.1">
    <property type="organism name" value="mouse"/>
</dbReference>
<dbReference type="AGR" id="MGI:1919785"/>
<dbReference type="CTD" id="219"/>
<dbReference type="MGI" id="MGI:1919785">
    <property type="gene designation" value="Aldh1b1"/>
</dbReference>
<dbReference type="VEuPathDB" id="HostDB:ENSMUSG00000035561"/>
<dbReference type="eggNOG" id="KOG2450">
    <property type="taxonomic scope" value="Eukaryota"/>
</dbReference>
<dbReference type="GeneTree" id="ENSGT00940000162530"/>
<dbReference type="HOGENOM" id="CLU_005391_0_1_1"/>
<dbReference type="InParanoid" id="Q9CZS1"/>
<dbReference type="OMA" id="WVNRYGR"/>
<dbReference type="OrthoDB" id="310895at2759"/>
<dbReference type="PhylomeDB" id="Q9CZS1"/>
<dbReference type="TreeFam" id="TF300455"/>
<dbReference type="BRENDA" id="1.2.1.3">
    <property type="organism ID" value="3474"/>
</dbReference>
<dbReference type="Reactome" id="R-MMU-71384">
    <property type="pathway name" value="Ethanol oxidation"/>
</dbReference>
<dbReference type="Reactome" id="R-MMU-9837999">
    <property type="pathway name" value="Mitochondrial protein degradation"/>
</dbReference>
<dbReference type="UniPathway" id="UPA00780">
    <property type="reaction ID" value="UER00768"/>
</dbReference>
<dbReference type="BioGRID-ORCS" id="72535">
    <property type="hits" value="2 hits in 79 CRISPR screens"/>
</dbReference>
<dbReference type="ChiTaRS" id="Aldh1b1">
    <property type="organism name" value="mouse"/>
</dbReference>
<dbReference type="PRO" id="PR:Q9CZS1"/>
<dbReference type="Proteomes" id="UP000000589">
    <property type="component" value="Chromosome 4"/>
</dbReference>
<dbReference type="RNAct" id="Q9CZS1">
    <property type="molecule type" value="protein"/>
</dbReference>
<dbReference type="Bgee" id="ENSMUSG00000035561">
    <property type="expression patterns" value="Expressed in crypt of Lieberkuhn of small intestine and 115 other cell types or tissues"/>
</dbReference>
<dbReference type="ExpressionAtlas" id="Q9CZS1">
    <property type="expression patterns" value="baseline and differential"/>
</dbReference>
<dbReference type="GO" id="GO:0005829">
    <property type="term" value="C:cytosol"/>
    <property type="evidence" value="ECO:0007669"/>
    <property type="project" value="Ensembl"/>
</dbReference>
<dbReference type="GO" id="GO:0005759">
    <property type="term" value="C:mitochondrial matrix"/>
    <property type="evidence" value="ECO:0007669"/>
    <property type="project" value="UniProtKB-SubCell"/>
</dbReference>
<dbReference type="GO" id="GO:0005739">
    <property type="term" value="C:mitochondrion"/>
    <property type="evidence" value="ECO:0007005"/>
    <property type="project" value="MGI"/>
</dbReference>
<dbReference type="GO" id="GO:0005654">
    <property type="term" value="C:nucleoplasm"/>
    <property type="evidence" value="ECO:0007669"/>
    <property type="project" value="Ensembl"/>
</dbReference>
<dbReference type="GO" id="GO:0004029">
    <property type="term" value="F:aldehyde dehydrogenase (NAD+) activity"/>
    <property type="evidence" value="ECO:0007669"/>
    <property type="project" value="UniProtKB-EC"/>
</dbReference>
<dbReference type="GO" id="GO:0006068">
    <property type="term" value="P:ethanol catabolic process"/>
    <property type="evidence" value="ECO:0007669"/>
    <property type="project" value="UniProtKB-UniPathway"/>
</dbReference>
<dbReference type="CDD" id="cd07141">
    <property type="entry name" value="ALDH_F1AB_F2_RALDH1"/>
    <property type="match status" value="1"/>
</dbReference>
<dbReference type="FunFam" id="3.40.605.10:FF:000029">
    <property type="entry name" value="Aldehyde dehydrogenase, mitochondrial"/>
    <property type="match status" value="1"/>
</dbReference>
<dbReference type="FunFam" id="3.40.309.10:FF:000001">
    <property type="entry name" value="Mitochondrial aldehyde dehydrogenase 2"/>
    <property type="match status" value="1"/>
</dbReference>
<dbReference type="Gene3D" id="3.40.605.10">
    <property type="entry name" value="Aldehyde Dehydrogenase, Chain A, domain 1"/>
    <property type="match status" value="1"/>
</dbReference>
<dbReference type="Gene3D" id="3.40.309.10">
    <property type="entry name" value="Aldehyde Dehydrogenase, Chain A, domain 2"/>
    <property type="match status" value="1"/>
</dbReference>
<dbReference type="InterPro" id="IPR016161">
    <property type="entry name" value="Ald_DH/histidinol_DH"/>
</dbReference>
<dbReference type="InterPro" id="IPR016163">
    <property type="entry name" value="Ald_DH_C"/>
</dbReference>
<dbReference type="InterPro" id="IPR016160">
    <property type="entry name" value="Ald_DH_CS_CYS"/>
</dbReference>
<dbReference type="InterPro" id="IPR029510">
    <property type="entry name" value="Ald_DH_CS_GLU"/>
</dbReference>
<dbReference type="InterPro" id="IPR016162">
    <property type="entry name" value="Ald_DH_N"/>
</dbReference>
<dbReference type="InterPro" id="IPR015590">
    <property type="entry name" value="Aldehyde_DH_dom"/>
</dbReference>
<dbReference type="PANTHER" id="PTHR11699">
    <property type="entry name" value="ALDEHYDE DEHYDROGENASE-RELATED"/>
    <property type="match status" value="1"/>
</dbReference>
<dbReference type="Pfam" id="PF00171">
    <property type="entry name" value="Aldedh"/>
    <property type="match status" value="1"/>
</dbReference>
<dbReference type="SUPFAM" id="SSF53720">
    <property type="entry name" value="ALDH-like"/>
    <property type="match status" value="1"/>
</dbReference>
<dbReference type="PROSITE" id="PS00070">
    <property type="entry name" value="ALDEHYDE_DEHYDR_CYS"/>
    <property type="match status" value="1"/>
</dbReference>
<dbReference type="PROSITE" id="PS00687">
    <property type="entry name" value="ALDEHYDE_DEHYDR_GLU"/>
    <property type="match status" value="1"/>
</dbReference>
<keyword id="KW-0007">Acetylation</keyword>
<keyword id="KW-0496">Mitochondrion</keyword>
<keyword id="KW-0520">NAD</keyword>
<keyword id="KW-0560">Oxidoreductase</keyword>
<keyword id="KW-1185">Reference proteome</keyword>
<keyword id="KW-0809">Transit peptide</keyword>
<organism>
    <name type="scientific">Mus musculus</name>
    <name type="common">Mouse</name>
    <dbReference type="NCBI Taxonomy" id="10090"/>
    <lineage>
        <taxon>Eukaryota</taxon>
        <taxon>Metazoa</taxon>
        <taxon>Chordata</taxon>
        <taxon>Craniata</taxon>
        <taxon>Vertebrata</taxon>
        <taxon>Euteleostomi</taxon>
        <taxon>Mammalia</taxon>
        <taxon>Eutheria</taxon>
        <taxon>Euarchontoglires</taxon>
        <taxon>Glires</taxon>
        <taxon>Rodentia</taxon>
        <taxon>Myomorpha</taxon>
        <taxon>Muroidea</taxon>
        <taxon>Muridae</taxon>
        <taxon>Murinae</taxon>
        <taxon>Mus</taxon>
        <taxon>Mus</taxon>
    </lineage>
</organism>
<protein>
    <recommendedName>
        <fullName>Aldehyde dehydrogenase X, mitochondrial</fullName>
        <ecNumber>1.2.1.3</ecNumber>
    </recommendedName>
    <alternativeName>
        <fullName>Aldehyde dehydrogenase family 1 member B1</fullName>
    </alternativeName>
</protein>
<comment type="function">
    <text evidence="1">ALDHs play a major role in the detoxification of alcohol-derived acetaldehyde. They are involved in the metabolism of corticosteroids, biogenic amines, neurotransmitters, and lipid peroxidation (By similarity).</text>
</comment>
<comment type="catalytic activity">
    <reaction>
        <text>an aldehyde + NAD(+) + H2O = a carboxylate + NADH + 2 H(+)</text>
        <dbReference type="Rhea" id="RHEA:16185"/>
        <dbReference type="ChEBI" id="CHEBI:15377"/>
        <dbReference type="ChEBI" id="CHEBI:15378"/>
        <dbReference type="ChEBI" id="CHEBI:17478"/>
        <dbReference type="ChEBI" id="CHEBI:29067"/>
        <dbReference type="ChEBI" id="CHEBI:57540"/>
        <dbReference type="ChEBI" id="CHEBI:57945"/>
        <dbReference type="EC" id="1.2.1.3"/>
    </reaction>
</comment>
<comment type="pathway">
    <text>Alcohol metabolism; ethanol degradation; acetate from ethanol: step 2/2.</text>
</comment>
<comment type="subunit">
    <text evidence="1">Homotetramer.</text>
</comment>
<comment type="subcellular location">
    <subcellularLocation>
        <location evidence="1">Mitochondrion matrix</location>
    </subcellularLocation>
</comment>
<comment type="similarity">
    <text evidence="5">Belongs to the aldehyde dehydrogenase family.</text>
</comment>
<name>AL1B1_MOUSE</name>
<reference key="1">
    <citation type="journal article" date="2005" name="Science">
        <title>The transcriptional landscape of the mammalian genome.</title>
        <authorList>
            <person name="Carninci P."/>
            <person name="Kasukawa T."/>
            <person name="Katayama S."/>
            <person name="Gough J."/>
            <person name="Frith M.C."/>
            <person name="Maeda N."/>
            <person name="Oyama R."/>
            <person name="Ravasi T."/>
            <person name="Lenhard B."/>
            <person name="Wells C."/>
            <person name="Kodzius R."/>
            <person name="Shimokawa K."/>
            <person name="Bajic V.B."/>
            <person name="Brenner S.E."/>
            <person name="Batalov S."/>
            <person name="Forrest A.R."/>
            <person name="Zavolan M."/>
            <person name="Davis M.J."/>
            <person name="Wilming L.G."/>
            <person name="Aidinis V."/>
            <person name="Allen J.E."/>
            <person name="Ambesi-Impiombato A."/>
            <person name="Apweiler R."/>
            <person name="Aturaliya R.N."/>
            <person name="Bailey T.L."/>
            <person name="Bansal M."/>
            <person name="Baxter L."/>
            <person name="Beisel K.W."/>
            <person name="Bersano T."/>
            <person name="Bono H."/>
            <person name="Chalk A.M."/>
            <person name="Chiu K.P."/>
            <person name="Choudhary V."/>
            <person name="Christoffels A."/>
            <person name="Clutterbuck D.R."/>
            <person name="Crowe M.L."/>
            <person name="Dalla E."/>
            <person name="Dalrymple B.P."/>
            <person name="de Bono B."/>
            <person name="Della Gatta G."/>
            <person name="di Bernardo D."/>
            <person name="Down T."/>
            <person name="Engstrom P."/>
            <person name="Fagiolini M."/>
            <person name="Faulkner G."/>
            <person name="Fletcher C.F."/>
            <person name="Fukushima T."/>
            <person name="Furuno M."/>
            <person name="Futaki S."/>
            <person name="Gariboldi M."/>
            <person name="Georgii-Hemming P."/>
            <person name="Gingeras T.R."/>
            <person name="Gojobori T."/>
            <person name="Green R.E."/>
            <person name="Gustincich S."/>
            <person name="Harbers M."/>
            <person name="Hayashi Y."/>
            <person name="Hensch T.K."/>
            <person name="Hirokawa N."/>
            <person name="Hill D."/>
            <person name="Huminiecki L."/>
            <person name="Iacono M."/>
            <person name="Ikeo K."/>
            <person name="Iwama A."/>
            <person name="Ishikawa T."/>
            <person name="Jakt M."/>
            <person name="Kanapin A."/>
            <person name="Katoh M."/>
            <person name="Kawasawa Y."/>
            <person name="Kelso J."/>
            <person name="Kitamura H."/>
            <person name="Kitano H."/>
            <person name="Kollias G."/>
            <person name="Krishnan S.P."/>
            <person name="Kruger A."/>
            <person name="Kummerfeld S.K."/>
            <person name="Kurochkin I.V."/>
            <person name="Lareau L.F."/>
            <person name="Lazarevic D."/>
            <person name="Lipovich L."/>
            <person name="Liu J."/>
            <person name="Liuni S."/>
            <person name="McWilliam S."/>
            <person name="Madan Babu M."/>
            <person name="Madera M."/>
            <person name="Marchionni L."/>
            <person name="Matsuda H."/>
            <person name="Matsuzawa S."/>
            <person name="Miki H."/>
            <person name="Mignone F."/>
            <person name="Miyake S."/>
            <person name="Morris K."/>
            <person name="Mottagui-Tabar S."/>
            <person name="Mulder N."/>
            <person name="Nakano N."/>
            <person name="Nakauchi H."/>
            <person name="Ng P."/>
            <person name="Nilsson R."/>
            <person name="Nishiguchi S."/>
            <person name="Nishikawa S."/>
            <person name="Nori F."/>
            <person name="Ohara O."/>
            <person name="Okazaki Y."/>
            <person name="Orlando V."/>
            <person name="Pang K.C."/>
            <person name="Pavan W.J."/>
            <person name="Pavesi G."/>
            <person name="Pesole G."/>
            <person name="Petrovsky N."/>
            <person name="Piazza S."/>
            <person name="Reed J."/>
            <person name="Reid J.F."/>
            <person name="Ring B.Z."/>
            <person name="Ringwald M."/>
            <person name="Rost B."/>
            <person name="Ruan Y."/>
            <person name="Salzberg S.L."/>
            <person name="Sandelin A."/>
            <person name="Schneider C."/>
            <person name="Schoenbach C."/>
            <person name="Sekiguchi K."/>
            <person name="Semple C.A."/>
            <person name="Seno S."/>
            <person name="Sessa L."/>
            <person name="Sheng Y."/>
            <person name="Shibata Y."/>
            <person name="Shimada H."/>
            <person name="Shimada K."/>
            <person name="Silva D."/>
            <person name="Sinclair B."/>
            <person name="Sperling S."/>
            <person name="Stupka E."/>
            <person name="Sugiura K."/>
            <person name="Sultana R."/>
            <person name="Takenaka Y."/>
            <person name="Taki K."/>
            <person name="Tammoja K."/>
            <person name="Tan S.L."/>
            <person name="Tang S."/>
            <person name="Taylor M.S."/>
            <person name="Tegner J."/>
            <person name="Teichmann S.A."/>
            <person name="Ueda H.R."/>
            <person name="van Nimwegen E."/>
            <person name="Verardo R."/>
            <person name="Wei C.L."/>
            <person name="Yagi K."/>
            <person name="Yamanishi H."/>
            <person name="Zabarovsky E."/>
            <person name="Zhu S."/>
            <person name="Zimmer A."/>
            <person name="Hide W."/>
            <person name="Bult C."/>
            <person name="Grimmond S.M."/>
            <person name="Teasdale R.D."/>
            <person name="Liu E.T."/>
            <person name="Brusic V."/>
            <person name="Quackenbush J."/>
            <person name="Wahlestedt C."/>
            <person name="Mattick J.S."/>
            <person name="Hume D.A."/>
            <person name="Kai C."/>
            <person name="Sasaki D."/>
            <person name="Tomaru Y."/>
            <person name="Fukuda S."/>
            <person name="Kanamori-Katayama M."/>
            <person name="Suzuki M."/>
            <person name="Aoki J."/>
            <person name="Arakawa T."/>
            <person name="Iida J."/>
            <person name="Imamura K."/>
            <person name="Itoh M."/>
            <person name="Kato T."/>
            <person name="Kawaji H."/>
            <person name="Kawagashira N."/>
            <person name="Kawashima T."/>
            <person name="Kojima M."/>
            <person name="Kondo S."/>
            <person name="Konno H."/>
            <person name="Nakano K."/>
            <person name="Ninomiya N."/>
            <person name="Nishio T."/>
            <person name="Okada M."/>
            <person name="Plessy C."/>
            <person name="Shibata K."/>
            <person name="Shiraki T."/>
            <person name="Suzuki S."/>
            <person name="Tagami M."/>
            <person name="Waki K."/>
            <person name="Watahiki A."/>
            <person name="Okamura-Oho Y."/>
            <person name="Suzuki H."/>
            <person name="Kawai J."/>
            <person name="Hayashizaki Y."/>
        </authorList>
    </citation>
    <scope>NUCLEOTIDE SEQUENCE [LARGE SCALE MRNA]</scope>
    <source>
        <strain>C57BL/6J</strain>
        <strain>NOD</strain>
        <tissue>Bone marrow</tissue>
        <tissue>Embryo</tissue>
        <tissue>Thymus</tissue>
    </source>
</reference>
<reference key="2">
    <citation type="journal article" date="2004" name="Genome Res.">
        <title>The status, quality, and expansion of the NIH full-length cDNA project: the Mammalian Gene Collection (MGC).</title>
        <authorList>
            <consortium name="The MGC Project Team"/>
        </authorList>
    </citation>
    <scope>NUCLEOTIDE SEQUENCE [LARGE SCALE MRNA]</scope>
    <source>
        <strain>C57BL/6J</strain>
        <strain>FVB/N</strain>
        <tissue>Brain</tissue>
        <tissue>Colon</tissue>
    </source>
</reference>
<reference key="3">
    <citation type="journal article" date="2010" name="Cell">
        <title>A tissue-specific atlas of mouse protein phosphorylation and expression.</title>
        <authorList>
            <person name="Huttlin E.L."/>
            <person name="Jedrychowski M.P."/>
            <person name="Elias J.E."/>
            <person name="Goswami T."/>
            <person name="Rad R."/>
            <person name="Beausoleil S.A."/>
            <person name="Villen J."/>
            <person name="Haas W."/>
            <person name="Sowa M.E."/>
            <person name="Gygi S.P."/>
        </authorList>
    </citation>
    <scope>IDENTIFICATION BY MASS SPECTROMETRY [LARGE SCALE ANALYSIS]</scope>
    <source>
        <tissue>Brain</tissue>
        <tissue>Heart</tissue>
        <tissue>Kidney</tissue>
        <tissue>Liver</tissue>
        <tissue>Lung</tissue>
        <tissue>Spleen</tissue>
        <tissue>Testis</tissue>
    </source>
</reference>
<reference key="4">
    <citation type="journal article" date="2013" name="Mol. Cell">
        <title>SIRT5-mediated lysine desuccinylation impacts diverse metabolic pathways.</title>
        <authorList>
            <person name="Park J."/>
            <person name="Chen Y."/>
            <person name="Tishkoff D.X."/>
            <person name="Peng C."/>
            <person name="Tan M."/>
            <person name="Dai L."/>
            <person name="Xie Z."/>
            <person name="Zhang Y."/>
            <person name="Zwaans B.M."/>
            <person name="Skinner M.E."/>
            <person name="Lombard D.B."/>
            <person name="Zhao Y."/>
        </authorList>
    </citation>
    <scope>SUCCINYLATION [LARGE SCALE ANALYSIS] AT LYS-54; LYS-83; LYS-366; LYS-385; LYS-401; LYS-416 AND LYS-428</scope>
    <scope>IDENTIFICATION BY MASS SPECTROMETRY [LARGE SCALE ANALYSIS]</scope>
    <source>
        <tissue>Liver</tissue>
    </source>
</reference>
<reference key="5">
    <citation type="journal article" date="2013" name="Proc. Natl. Acad. Sci. U.S.A.">
        <title>Label-free quantitative proteomics of the lysine acetylome in mitochondria identifies substrates of SIRT3 in metabolic pathways.</title>
        <authorList>
            <person name="Rardin M.J."/>
            <person name="Newman J.C."/>
            <person name="Held J.M."/>
            <person name="Cusack M.P."/>
            <person name="Sorensen D.J."/>
            <person name="Li B."/>
            <person name="Schilling B."/>
            <person name="Mooney S.D."/>
            <person name="Kahn C.R."/>
            <person name="Verdin E."/>
            <person name="Gibson B.W."/>
        </authorList>
    </citation>
    <scope>ACETYLATION [LARGE SCALE ANALYSIS] AT LYS-53; LYS-54; LYS-366; LYS-385; LYS-401; LYS-416; LYS-428 AND LYS-431</scope>
    <scope>IDENTIFICATION BY MASS SPECTROMETRY [LARGE SCALE ANALYSIS]</scope>
    <source>
        <tissue>Liver</tissue>
    </source>
</reference>
<feature type="transit peptide" description="Mitochondrion" evidence="2">
    <location>
        <begin position="1"/>
        <end position="19"/>
    </location>
</feature>
<feature type="chain" id="PRO_0000271411" description="Aldehyde dehydrogenase X, mitochondrial">
    <location>
        <begin position="20"/>
        <end position="519"/>
    </location>
</feature>
<feature type="active site" description="Proton acceptor" evidence="3 4">
    <location>
        <position position="287"/>
    </location>
</feature>
<feature type="active site" description="Nucleophile" evidence="3 4">
    <location>
        <position position="321"/>
    </location>
</feature>
<feature type="binding site" evidence="1">
    <location>
        <begin position="264"/>
        <end position="269"/>
    </location>
    <ligand>
        <name>NAD(+)</name>
        <dbReference type="ChEBI" id="CHEBI:57540"/>
    </ligand>
</feature>
<feature type="site" description="Transition state stabilizer" evidence="1">
    <location>
        <position position="188"/>
    </location>
</feature>
<feature type="modified residue" description="N6-acetyllysine" evidence="6">
    <location>
        <position position="53"/>
    </location>
</feature>
<feature type="modified residue" description="N6-acetyllysine; alternate" evidence="6">
    <location>
        <position position="54"/>
    </location>
</feature>
<feature type="modified residue" description="N6-succinyllysine; alternate" evidence="7">
    <location>
        <position position="54"/>
    </location>
</feature>
<feature type="modified residue" description="N6-succinyllysine" evidence="7">
    <location>
        <position position="83"/>
    </location>
</feature>
<feature type="modified residue" description="N6-acetyllysine; alternate" evidence="6">
    <location>
        <position position="366"/>
    </location>
</feature>
<feature type="modified residue" description="N6-succinyllysine; alternate" evidence="7">
    <location>
        <position position="366"/>
    </location>
</feature>
<feature type="modified residue" description="N6-acetyllysine; alternate" evidence="6">
    <location>
        <position position="385"/>
    </location>
</feature>
<feature type="modified residue" description="N6-succinyllysine; alternate" evidence="7">
    <location>
        <position position="385"/>
    </location>
</feature>
<feature type="modified residue" description="N6-acetyllysine; alternate" evidence="6">
    <location>
        <position position="401"/>
    </location>
</feature>
<feature type="modified residue" description="N6-succinyllysine; alternate" evidence="7">
    <location>
        <position position="401"/>
    </location>
</feature>
<feature type="modified residue" description="N6-acetyllysine; alternate" evidence="6">
    <location>
        <position position="416"/>
    </location>
</feature>
<feature type="modified residue" description="N6-succinyllysine; alternate" evidence="7">
    <location>
        <position position="416"/>
    </location>
</feature>
<feature type="modified residue" description="N6-acetyllysine; alternate" evidence="6">
    <location>
        <position position="428"/>
    </location>
</feature>
<feature type="modified residue" description="N6-succinyllysine; alternate" evidence="7">
    <location>
        <position position="428"/>
    </location>
</feature>
<feature type="modified residue" description="N6-acetyllysine" evidence="6">
    <location>
        <position position="431"/>
    </location>
</feature>
<feature type="sequence conflict" description="In Ref. 1; BAE30339." evidence="5" ref="1">
    <original>K</original>
    <variation>R</variation>
    <location>
        <position position="146"/>
    </location>
</feature>
<feature type="sequence conflict" description="In Ref. 1; BAE30339." evidence="5" ref="1">
    <original>A</original>
    <variation>T</variation>
    <location>
        <position position="261"/>
    </location>
</feature>
<sequence length="519" mass="57553">MLTARLLLPRLLCLQGRTTSYSTAAALPNPIPNPEICYNKLFINNEWHDAVSKKTFPTVNPTTGEVIGHVAEGDRADVDLAVKAAREAFRLGSPWRRMDASERGRLLNRLADLVERDRVYLASLETLDNGKPFQESYVLDLDEVIKVYRYFAGWADKWHGKTIPMDGEHFCFTRHEPVGVCGQIIPWNFPLVMQGWKLAPALATGNTVVMKVAEQTPLSALYLASLIKEAGFPPGVVNIITGYGPTAGAAIAQHMDVDKVAFTGSTEVGHLIQKAAGESNLKRVTLELGGKSPSIVLADADMEHAVDQCHEALFFNMGQCCCAGSRTFVEESIYREFLERTVEKAKQRKVGNPFELDTQQGPQVDKEQFERILGYIRLGQKEGAKLLCGGERLGERGFFIKPTVFGDVQDGMRIAKEEIFGPVQPLFKFKKIEEVIQRANNTRYGLAAAVFTRDLDKAIYFTQALQAGTVWVNTYNIVTCHTPFGGFKESGNGRELGEDGLRAYTEVKTVTIKVPEKNS</sequence>
<accession>Q9CZS1</accession>
<accession>Q3UAH5</accession>